<organism>
    <name type="scientific">Methanoculleus marisnigri (strain ATCC 35101 / DSM 1498 / JR1)</name>
    <dbReference type="NCBI Taxonomy" id="368407"/>
    <lineage>
        <taxon>Archaea</taxon>
        <taxon>Methanobacteriati</taxon>
        <taxon>Methanobacteriota</taxon>
        <taxon>Stenosarchaea group</taxon>
        <taxon>Methanomicrobia</taxon>
        <taxon>Methanomicrobiales</taxon>
        <taxon>Methanomicrobiaceae</taxon>
        <taxon>Methanoculleus</taxon>
    </lineage>
</organism>
<reference key="1">
    <citation type="journal article" date="2009" name="Stand. Genomic Sci.">
        <title>Complete genome sequence of Methanoculleus marisnigri Romesser et al. 1981 type strain JR1.</title>
        <authorList>
            <person name="Anderson I.J."/>
            <person name="Sieprawska-Lupa M."/>
            <person name="Lapidus A."/>
            <person name="Nolan M."/>
            <person name="Copeland A."/>
            <person name="Glavina Del Rio T."/>
            <person name="Tice H."/>
            <person name="Dalin E."/>
            <person name="Barry K."/>
            <person name="Saunders E."/>
            <person name="Han C."/>
            <person name="Brettin T."/>
            <person name="Detter J.C."/>
            <person name="Bruce D."/>
            <person name="Mikhailova N."/>
            <person name="Pitluck S."/>
            <person name="Hauser L."/>
            <person name="Land M."/>
            <person name="Lucas S."/>
            <person name="Richardson P."/>
            <person name="Whitman W.B."/>
            <person name="Kyrpides N.C."/>
        </authorList>
    </citation>
    <scope>NUCLEOTIDE SEQUENCE [LARGE SCALE GENOMIC DNA]</scope>
    <source>
        <strain>ATCC 35101 / DSM 1498 / JR1</strain>
    </source>
</reference>
<name>FAEHP_METMJ</name>
<keyword id="KW-0119">Carbohydrate metabolism</keyword>
<keyword id="KW-0456">Lyase</keyword>
<keyword id="KW-0511">Multifunctional enzyme</keyword>
<comment type="function">
    <text evidence="1">Catalyzes the condensation of formaldehyde with tetrahydromethanopterin (H(4)MPT) to 5,10-methylenetetrahydromethanopterin.</text>
</comment>
<comment type="function">
    <text evidence="1">Catalyzes the reversible formation of ribulose-5-phosphate and formaldehyde from 3-hexulose-6-phosphate.</text>
</comment>
<comment type="catalytic activity">
    <reaction evidence="1">
        <text>5,6,7,8-tetrahydromethanopterin + formaldehyde = 5,10-methylenetetrahydromethanopterin + H2O</text>
        <dbReference type="Rhea" id="RHEA:24678"/>
        <dbReference type="ChEBI" id="CHEBI:15377"/>
        <dbReference type="ChEBI" id="CHEBI:16842"/>
        <dbReference type="ChEBI" id="CHEBI:57818"/>
        <dbReference type="ChEBI" id="CHEBI:58103"/>
        <dbReference type="EC" id="4.2.1.147"/>
    </reaction>
</comment>
<comment type="catalytic activity">
    <reaction evidence="1">
        <text>D-ribulose 5-phosphate + formaldehyde = D-arabino-hex-3-ulose 6-phosphate</text>
        <dbReference type="Rhea" id="RHEA:25201"/>
        <dbReference type="ChEBI" id="CHEBI:16842"/>
        <dbReference type="ChEBI" id="CHEBI:58121"/>
        <dbReference type="ChEBI" id="CHEBI:58542"/>
        <dbReference type="EC" id="4.1.2.43"/>
    </reaction>
</comment>
<comment type="pathway">
    <text evidence="1">Carbohydrate biosynthesis; D-ribose 5-phosphate biosynthesis.</text>
</comment>
<comment type="similarity">
    <text evidence="1">In the N-terminal section; belongs to the formaldehyde-activating enzyme family.</text>
</comment>
<comment type="similarity">
    <text evidence="1">In the C-terminal section; belongs to the HPS/KGPDC family. HPS subfamily.</text>
</comment>
<dbReference type="EC" id="4.2.1.147" evidence="1"/>
<dbReference type="EC" id="4.1.2.43" evidence="1"/>
<dbReference type="EMBL" id="CP000562">
    <property type="protein sequence ID" value="ABN57018.1"/>
    <property type="molecule type" value="Genomic_DNA"/>
</dbReference>
<dbReference type="RefSeq" id="WP_011843929.1">
    <property type="nucleotide sequence ID" value="NC_009051.1"/>
</dbReference>
<dbReference type="SMR" id="A3CUG8"/>
<dbReference type="STRING" id="368407.Memar_1085"/>
<dbReference type="GeneID" id="4846708"/>
<dbReference type="KEGG" id="mem:Memar_1085"/>
<dbReference type="eggNOG" id="arCOG00103">
    <property type="taxonomic scope" value="Archaea"/>
</dbReference>
<dbReference type="HOGENOM" id="CLU_701335_0_0_2"/>
<dbReference type="OrthoDB" id="64276at2157"/>
<dbReference type="UniPathway" id="UPA00293"/>
<dbReference type="Proteomes" id="UP000002146">
    <property type="component" value="Chromosome"/>
</dbReference>
<dbReference type="GO" id="GO:0033982">
    <property type="term" value="F:3-dehydro-L-gulonate-6-phosphate decarboxylase activity"/>
    <property type="evidence" value="ECO:0007669"/>
    <property type="project" value="TreeGrafter"/>
</dbReference>
<dbReference type="GO" id="GO:0016840">
    <property type="term" value="F:carbon-nitrogen lyase activity"/>
    <property type="evidence" value="ECO:0007669"/>
    <property type="project" value="InterPro"/>
</dbReference>
<dbReference type="GO" id="GO:0043801">
    <property type="term" value="F:hexulose-6-phosphate synthase activity"/>
    <property type="evidence" value="ECO:0007669"/>
    <property type="project" value="UniProtKB-UniRule"/>
</dbReference>
<dbReference type="GO" id="GO:0016836">
    <property type="term" value="F:hydro-lyase activity"/>
    <property type="evidence" value="ECO:0007669"/>
    <property type="project" value="UniProtKB-UniRule"/>
</dbReference>
<dbReference type="GO" id="GO:0004590">
    <property type="term" value="F:orotidine-5'-phosphate decarboxylase activity"/>
    <property type="evidence" value="ECO:0007669"/>
    <property type="project" value="InterPro"/>
</dbReference>
<dbReference type="GO" id="GO:0006207">
    <property type="term" value="P:'de novo' pyrimidine nucleobase biosynthetic process"/>
    <property type="evidence" value="ECO:0007669"/>
    <property type="project" value="InterPro"/>
</dbReference>
<dbReference type="GO" id="GO:0016051">
    <property type="term" value="P:carbohydrate biosynthetic process"/>
    <property type="evidence" value="ECO:0007669"/>
    <property type="project" value="UniProtKB-UniRule"/>
</dbReference>
<dbReference type="GO" id="GO:0019854">
    <property type="term" value="P:L-ascorbic acid catabolic process"/>
    <property type="evidence" value="ECO:0007669"/>
    <property type="project" value="TreeGrafter"/>
</dbReference>
<dbReference type="CDD" id="cd04726">
    <property type="entry name" value="KGPDC_HPS"/>
    <property type="match status" value="1"/>
</dbReference>
<dbReference type="FunFam" id="3.20.20.70:FF:000022">
    <property type="entry name" value="3-keto-L-gulonate-6-phosphate decarboxylase UlaD"/>
    <property type="match status" value="1"/>
</dbReference>
<dbReference type="FunFam" id="3.30.230.60:FF:000001">
    <property type="entry name" value="5,6,7,8-tetrahydromethanopterin hydro-lyase"/>
    <property type="match status" value="1"/>
</dbReference>
<dbReference type="Gene3D" id="3.20.20.70">
    <property type="entry name" value="Aldolase class I"/>
    <property type="match status" value="1"/>
</dbReference>
<dbReference type="Gene3D" id="3.30.230.60">
    <property type="entry name" value="Formaldehyde-activating enzyme"/>
    <property type="match status" value="1"/>
</dbReference>
<dbReference type="HAMAP" id="MF_01268">
    <property type="entry name" value="Fae_Hps"/>
    <property type="match status" value="1"/>
</dbReference>
<dbReference type="InterPro" id="IPR013785">
    <property type="entry name" value="Aldolase_TIM"/>
</dbReference>
<dbReference type="InterPro" id="IPR020868">
    <property type="entry name" value="Fae/Hps"/>
</dbReference>
<dbReference type="InterPro" id="IPR014826">
    <property type="entry name" value="HCHO-activating_enzyme"/>
</dbReference>
<dbReference type="InterPro" id="IPR037075">
    <property type="entry name" value="HCHO-activating_enzyme_sf"/>
</dbReference>
<dbReference type="InterPro" id="IPR041710">
    <property type="entry name" value="HPS/KGPDC"/>
</dbReference>
<dbReference type="InterPro" id="IPR001754">
    <property type="entry name" value="OMPdeCOase_dom"/>
</dbReference>
<dbReference type="InterPro" id="IPR020568">
    <property type="entry name" value="Ribosomal_Su5_D2-typ_SF"/>
</dbReference>
<dbReference type="InterPro" id="IPR011060">
    <property type="entry name" value="RibuloseP-bd_barrel"/>
</dbReference>
<dbReference type="NCBIfam" id="TIGR03126">
    <property type="entry name" value="one_C_fae"/>
    <property type="match status" value="1"/>
</dbReference>
<dbReference type="NCBIfam" id="NF009833">
    <property type="entry name" value="PRK13307.1"/>
    <property type="match status" value="1"/>
</dbReference>
<dbReference type="PANTHER" id="PTHR35039">
    <property type="entry name" value="3-KETO-L-GULONATE-6-PHOSPHATE DECARBOXYLASE SGBH-RELATED"/>
    <property type="match status" value="1"/>
</dbReference>
<dbReference type="PANTHER" id="PTHR35039:SF3">
    <property type="entry name" value="3-KETO-L-GULONATE-6-PHOSPHATE DECARBOXYLASE SGBH-RELATED"/>
    <property type="match status" value="1"/>
</dbReference>
<dbReference type="Pfam" id="PF08714">
    <property type="entry name" value="Fae"/>
    <property type="match status" value="1"/>
</dbReference>
<dbReference type="Pfam" id="PF00215">
    <property type="entry name" value="OMPdecase"/>
    <property type="match status" value="1"/>
</dbReference>
<dbReference type="SMART" id="SM00934">
    <property type="entry name" value="OMPdecase"/>
    <property type="match status" value="1"/>
</dbReference>
<dbReference type="SUPFAM" id="SSF54211">
    <property type="entry name" value="Ribosomal protein S5 domain 2-like"/>
    <property type="match status" value="1"/>
</dbReference>
<dbReference type="SUPFAM" id="SSF51366">
    <property type="entry name" value="Ribulose-phoshate binding barrel"/>
    <property type="match status" value="1"/>
</dbReference>
<gene>
    <name evidence="1" type="primary">fae-hps</name>
    <name type="ordered locus">Memar_1085</name>
</gene>
<proteinExistence type="inferred from homology"/>
<feature type="chain" id="PRO_1000067324" description="Bifunctional enzyme Fae/Hps">
    <location>
        <begin position="1"/>
        <end position="393"/>
    </location>
</feature>
<feature type="region of interest" description="Formaldehyde-activating enzyme" evidence="1">
    <location>
        <begin position="1"/>
        <end position="161"/>
    </location>
</feature>
<feature type="region of interest" description="3-hexulose-6-phosphate synthase" evidence="1">
    <location>
        <begin position="162"/>
        <end position="393"/>
    </location>
</feature>
<feature type="active site" description="Proton donor" evidence="1">
    <location>
        <position position="17"/>
    </location>
</feature>
<feature type="binding site" evidence="1">
    <location>
        <position position="19"/>
    </location>
    <ligand>
        <name>substrate</name>
    </ligand>
</feature>
<feature type="binding site" evidence="1">
    <location>
        <position position="48"/>
    </location>
    <ligand>
        <name>substrate</name>
    </ligand>
</feature>
<feature type="binding site" evidence="1">
    <location>
        <position position="66"/>
    </location>
    <ligand>
        <name>substrate</name>
    </ligand>
</feature>
<feature type="binding site" evidence="1">
    <location>
        <position position="68"/>
    </location>
    <ligand>
        <name>substrate</name>
    </ligand>
</feature>
<feature type="binding site" evidence="1">
    <location>
        <position position="83"/>
    </location>
    <ligand>
        <name>substrate</name>
    </ligand>
</feature>
<sequence length="393" mass="43018">MYLIGEALVGDGAELAHIDLIMGNKEGAVGQAFANSISQLSKGHTPLLAVVRPNLPTKPSTLIIPKVTLKKEYQVNQMFGPVQAAVAKAVADSIEEGVFEGVDIEDTVIMASVFVHPTAQDYNKIYRFNYGAMKLALRRALDRFPDVETLLHEKDRAAHAVMGFKVQRLWDPPYLQVAMDLVDRNHMNRVLDELPQNDHLIIEAGTPLIKKFGLSIISEIRERRPNAFIVADLKTLDTGNLEARMTADAGADAVVISGLAPISTIEKAIEDTRKTGIYTVIDMLNVKDPVAVVKQLKVKPDVVELHRGIDVEDTAYAWGDIPAIKKAGGERLLVATAGGIRQGVVKDARKAGADILVVGRAITASKNIQHAAEEFLEELSTEEIDQFRIMTDF</sequence>
<protein>
    <recommendedName>
        <fullName evidence="1">Bifunctional enzyme Fae/Hps</fullName>
    </recommendedName>
    <domain>
        <recommendedName>
            <fullName evidence="1">5,6,7,8-tetrahydromethanopterin hydro-lyase</fullName>
            <ecNumber evidence="1">4.2.1.147</ecNumber>
        </recommendedName>
        <alternativeName>
            <fullName evidence="1">Formaldehyde-activating enzyme</fullName>
            <shortName evidence="1">Fae</shortName>
        </alternativeName>
    </domain>
    <domain>
        <recommendedName>
            <fullName evidence="1">3-hexulose-6-phosphate synthase</fullName>
            <shortName evidence="1">HPS</shortName>
            <ecNumber evidence="1">4.1.2.43</ecNumber>
        </recommendedName>
        <alternativeName>
            <fullName evidence="1">D-arabino-3-hexulose-6-phosphate formaldehyde lyase</fullName>
        </alternativeName>
    </domain>
</protein>
<accession>A3CUG8</accession>
<evidence type="ECO:0000255" key="1">
    <source>
        <dbReference type="HAMAP-Rule" id="MF_01268"/>
    </source>
</evidence>